<keyword id="KW-0687">Ribonucleoprotein</keyword>
<keyword id="KW-0689">Ribosomal protein</keyword>
<organism>
    <name type="scientific">Rickettsia canadensis (strain McKiel)</name>
    <dbReference type="NCBI Taxonomy" id="293613"/>
    <lineage>
        <taxon>Bacteria</taxon>
        <taxon>Pseudomonadati</taxon>
        <taxon>Pseudomonadota</taxon>
        <taxon>Alphaproteobacteria</taxon>
        <taxon>Rickettsiales</taxon>
        <taxon>Rickettsiaceae</taxon>
        <taxon>Rickettsieae</taxon>
        <taxon>Rickettsia</taxon>
        <taxon>belli group</taxon>
    </lineage>
</organism>
<name>RL7_RICCK</name>
<gene>
    <name evidence="1" type="primary">rplL</name>
    <name type="ordered locus">A1E_00710</name>
</gene>
<sequence length="125" mass="13110">MADLAKIEEQLSSLTLMQAAELVKMLEEKWGVSAAAPVPMAAASAPAAAEEAVAEKTDFEVVLTAVGGKKVEVIKVVREITGLGLIEAKKLVDEAPKAVKQSVKKAEAEEIKSKLEAAGAKVELK</sequence>
<reference key="1">
    <citation type="submission" date="2007-09" db="EMBL/GenBank/DDBJ databases">
        <title>Complete genome sequence of Rickettsia canadensis.</title>
        <authorList>
            <person name="Madan A."/>
            <person name="Fahey J."/>
            <person name="Helton E."/>
            <person name="Ketteman M."/>
            <person name="Madan A."/>
            <person name="Rodrigues S."/>
            <person name="Sanchez A."/>
            <person name="Whiting M."/>
            <person name="Dasch G."/>
            <person name="Eremeeva M."/>
        </authorList>
    </citation>
    <scope>NUCLEOTIDE SEQUENCE [LARGE SCALE GENOMIC DNA]</scope>
    <source>
        <strain>McKiel</strain>
    </source>
</reference>
<accession>A8EXK7</accession>
<feature type="chain" id="PRO_1000007076" description="Large ribosomal subunit protein bL12">
    <location>
        <begin position="1"/>
        <end position="125"/>
    </location>
</feature>
<evidence type="ECO:0000255" key="1">
    <source>
        <dbReference type="HAMAP-Rule" id="MF_00368"/>
    </source>
</evidence>
<evidence type="ECO:0000305" key="2"/>
<proteinExistence type="inferred from homology"/>
<comment type="function">
    <text evidence="1">Forms part of the ribosomal stalk which helps the ribosome interact with GTP-bound translation factors. Is thus essential for accurate translation.</text>
</comment>
<comment type="subunit">
    <text evidence="1">Homodimer. Part of the ribosomal stalk of the 50S ribosomal subunit. Forms a multimeric L10(L12)X complex, where L10 forms an elongated spine to which 2 to 4 L12 dimers bind in a sequential fashion. Binds GTP-bound translation factors.</text>
</comment>
<comment type="similarity">
    <text evidence="1">Belongs to the bacterial ribosomal protein bL12 family.</text>
</comment>
<protein>
    <recommendedName>
        <fullName evidence="1">Large ribosomal subunit protein bL12</fullName>
    </recommendedName>
    <alternativeName>
        <fullName evidence="2">50S ribosomal protein L7/L12</fullName>
    </alternativeName>
</protein>
<dbReference type="EMBL" id="CP000409">
    <property type="protein sequence ID" value="ABV73090.1"/>
    <property type="molecule type" value="Genomic_DNA"/>
</dbReference>
<dbReference type="RefSeq" id="WP_012148291.1">
    <property type="nucleotide sequence ID" value="NC_009879.1"/>
</dbReference>
<dbReference type="SMR" id="A8EXK7"/>
<dbReference type="STRING" id="293613.A1E_00710"/>
<dbReference type="KEGG" id="rcm:A1E_00710"/>
<dbReference type="eggNOG" id="COG0222">
    <property type="taxonomic scope" value="Bacteria"/>
</dbReference>
<dbReference type="HOGENOM" id="CLU_086499_3_2_5"/>
<dbReference type="Proteomes" id="UP000007056">
    <property type="component" value="Chromosome"/>
</dbReference>
<dbReference type="GO" id="GO:0005737">
    <property type="term" value="C:cytoplasm"/>
    <property type="evidence" value="ECO:0007669"/>
    <property type="project" value="UniProtKB-ARBA"/>
</dbReference>
<dbReference type="GO" id="GO:1990904">
    <property type="term" value="C:ribonucleoprotein complex"/>
    <property type="evidence" value="ECO:0007669"/>
    <property type="project" value="UniProtKB-KW"/>
</dbReference>
<dbReference type="GO" id="GO:0005840">
    <property type="term" value="C:ribosome"/>
    <property type="evidence" value="ECO:0007669"/>
    <property type="project" value="UniProtKB-KW"/>
</dbReference>
<dbReference type="GO" id="GO:0003729">
    <property type="term" value="F:mRNA binding"/>
    <property type="evidence" value="ECO:0007669"/>
    <property type="project" value="TreeGrafter"/>
</dbReference>
<dbReference type="GO" id="GO:0003735">
    <property type="term" value="F:structural constituent of ribosome"/>
    <property type="evidence" value="ECO:0007669"/>
    <property type="project" value="InterPro"/>
</dbReference>
<dbReference type="GO" id="GO:0006412">
    <property type="term" value="P:translation"/>
    <property type="evidence" value="ECO:0007669"/>
    <property type="project" value="UniProtKB-UniRule"/>
</dbReference>
<dbReference type="CDD" id="cd00387">
    <property type="entry name" value="Ribosomal_L7_L12"/>
    <property type="match status" value="1"/>
</dbReference>
<dbReference type="FunFam" id="3.30.1390.10:FF:000001">
    <property type="entry name" value="50S ribosomal protein L7/L12"/>
    <property type="match status" value="1"/>
</dbReference>
<dbReference type="Gene3D" id="3.30.1390.10">
    <property type="match status" value="1"/>
</dbReference>
<dbReference type="Gene3D" id="1.20.5.710">
    <property type="entry name" value="Single helix bin"/>
    <property type="match status" value="1"/>
</dbReference>
<dbReference type="HAMAP" id="MF_00368">
    <property type="entry name" value="Ribosomal_bL12"/>
    <property type="match status" value="1"/>
</dbReference>
<dbReference type="InterPro" id="IPR000206">
    <property type="entry name" value="Ribosomal_bL12"/>
</dbReference>
<dbReference type="InterPro" id="IPR013823">
    <property type="entry name" value="Ribosomal_bL12_C"/>
</dbReference>
<dbReference type="InterPro" id="IPR014719">
    <property type="entry name" value="Ribosomal_bL12_C/ClpS-like"/>
</dbReference>
<dbReference type="InterPro" id="IPR008932">
    <property type="entry name" value="Ribosomal_bL12_oligo"/>
</dbReference>
<dbReference type="InterPro" id="IPR036235">
    <property type="entry name" value="Ribosomal_bL12_oligo_N_sf"/>
</dbReference>
<dbReference type="NCBIfam" id="TIGR00855">
    <property type="entry name" value="L12"/>
    <property type="match status" value="1"/>
</dbReference>
<dbReference type="PANTHER" id="PTHR45987">
    <property type="entry name" value="39S RIBOSOMAL PROTEIN L12"/>
    <property type="match status" value="1"/>
</dbReference>
<dbReference type="PANTHER" id="PTHR45987:SF4">
    <property type="entry name" value="LARGE RIBOSOMAL SUBUNIT PROTEIN BL12M"/>
    <property type="match status" value="1"/>
</dbReference>
<dbReference type="Pfam" id="PF00542">
    <property type="entry name" value="Ribosomal_L12"/>
    <property type="match status" value="1"/>
</dbReference>
<dbReference type="Pfam" id="PF16320">
    <property type="entry name" value="Ribosomal_L12_N"/>
    <property type="match status" value="1"/>
</dbReference>
<dbReference type="SUPFAM" id="SSF54736">
    <property type="entry name" value="ClpS-like"/>
    <property type="match status" value="1"/>
</dbReference>
<dbReference type="SUPFAM" id="SSF48300">
    <property type="entry name" value="Ribosomal protein L7/12, oligomerisation (N-terminal) domain"/>
    <property type="match status" value="1"/>
</dbReference>